<protein>
    <recommendedName>
        <fullName>Acyl-[acyl-carrier-protein] desaturase 7, chloroplastic</fullName>
        <ecNumber>1.14.19.-</ecNumber>
    </recommendedName>
</protein>
<comment type="function">
    <text evidence="3">Introduces a cis double bond in the acyl chain of an acyl-[acyl-carrier protein].</text>
</comment>
<comment type="cofactor">
    <cofactor evidence="1">
        <name>Fe(2+)</name>
        <dbReference type="ChEBI" id="CHEBI:29033"/>
    </cofactor>
    <text evidence="1">Binds 2 Fe(2+) ions per subunit.</text>
</comment>
<comment type="pathway">
    <text>Lipid metabolism; fatty acid metabolism.</text>
</comment>
<comment type="subunit">
    <text evidence="1">Homodimer.</text>
</comment>
<comment type="subcellular location">
    <subcellularLocation>
        <location evidence="3">Plastid</location>
        <location evidence="3">Chloroplast</location>
    </subcellularLocation>
</comment>
<comment type="similarity">
    <text evidence="3">Belongs to the fatty acid desaturase type 2 family.</text>
</comment>
<name>STAD7_ORYSJ</name>
<accession>Q6Z1I5</accession>
<accession>A0A0P0XCZ3</accession>
<accession>A3BQJ4</accession>
<sequence>MAASATTSTLAVTMFGYPNRNCHLKPPATATLRFWRSAAAAAVATSRREAEAEEADEVRRCLAPARLEVLEQMEPWVEAHVLPLLKPAEEAWQPADLVPDAAALGADGFHAACVELRGRAAGVPDAHLVCLVGNMVTEEALPTYQSMANRFESARDVTGADATAWARWIRGWSAEENRHGDVLNRYMYLSGRLDMRQVERTVHRLIGSGMAMHAPASPYHGFIYVAFQERATAISHGNTARNVRAHGDDALARICGAIASDEKRHEAAYTRVVERLLEADPDTTVRALAYMMRRRITMPAALMDDGRDADLFAHYAAAAQQAGTYTASDYRGILEHLIRRWRVAELEAGLSGEGRRARDYVCALPQKIRRMEEKAHDRAAQMRKRPTAIPFSWIFDKPVDLMLP</sequence>
<organism>
    <name type="scientific">Oryza sativa subsp. japonica</name>
    <name type="common">Rice</name>
    <dbReference type="NCBI Taxonomy" id="39947"/>
    <lineage>
        <taxon>Eukaryota</taxon>
        <taxon>Viridiplantae</taxon>
        <taxon>Streptophyta</taxon>
        <taxon>Embryophyta</taxon>
        <taxon>Tracheophyta</taxon>
        <taxon>Spermatophyta</taxon>
        <taxon>Magnoliopsida</taxon>
        <taxon>Liliopsida</taxon>
        <taxon>Poales</taxon>
        <taxon>Poaceae</taxon>
        <taxon>BOP clade</taxon>
        <taxon>Oryzoideae</taxon>
        <taxon>Oryzeae</taxon>
        <taxon>Oryzinae</taxon>
        <taxon>Oryza</taxon>
        <taxon>Oryza sativa</taxon>
    </lineage>
</organism>
<reference key="1">
    <citation type="journal article" date="2005" name="Nature">
        <title>The map-based sequence of the rice genome.</title>
        <authorList>
            <consortium name="International rice genome sequencing project (IRGSP)"/>
        </authorList>
    </citation>
    <scope>NUCLEOTIDE SEQUENCE [LARGE SCALE GENOMIC DNA]</scope>
    <source>
        <strain>cv. Nipponbare</strain>
    </source>
</reference>
<reference key="2">
    <citation type="journal article" date="2008" name="Nucleic Acids Res.">
        <title>The rice annotation project database (RAP-DB): 2008 update.</title>
        <authorList>
            <consortium name="The rice annotation project (RAP)"/>
        </authorList>
    </citation>
    <scope>GENOME REANNOTATION</scope>
    <source>
        <strain>cv. Nipponbare</strain>
    </source>
</reference>
<reference key="3">
    <citation type="journal article" date="2013" name="Rice">
        <title>Improvement of the Oryza sativa Nipponbare reference genome using next generation sequence and optical map data.</title>
        <authorList>
            <person name="Kawahara Y."/>
            <person name="de la Bastide M."/>
            <person name="Hamilton J.P."/>
            <person name="Kanamori H."/>
            <person name="McCombie W.R."/>
            <person name="Ouyang S."/>
            <person name="Schwartz D.C."/>
            <person name="Tanaka T."/>
            <person name="Wu J."/>
            <person name="Zhou S."/>
            <person name="Childs K.L."/>
            <person name="Davidson R.M."/>
            <person name="Lin H."/>
            <person name="Quesada-Ocampo L."/>
            <person name="Vaillancourt B."/>
            <person name="Sakai H."/>
            <person name="Lee S.S."/>
            <person name="Kim J."/>
            <person name="Numa H."/>
            <person name="Itoh T."/>
            <person name="Buell C.R."/>
            <person name="Matsumoto T."/>
        </authorList>
    </citation>
    <scope>GENOME REANNOTATION</scope>
    <source>
        <strain>cv. Nipponbare</strain>
    </source>
</reference>
<reference key="4">
    <citation type="journal article" date="2005" name="PLoS Biol.">
        <title>The genomes of Oryza sativa: a history of duplications.</title>
        <authorList>
            <person name="Yu J."/>
            <person name="Wang J."/>
            <person name="Lin W."/>
            <person name="Li S."/>
            <person name="Li H."/>
            <person name="Zhou J."/>
            <person name="Ni P."/>
            <person name="Dong W."/>
            <person name="Hu S."/>
            <person name="Zeng C."/>
            <person name="Zhang J."/>
            <person name="Zhang Y."/>
            <person name="Li R."/>
            <person name="Xu Z."/>
            <person name="Li S."/>
            <person name="Li X."/>
            <person name="Zheng H."/>
            <person name="Cong L."/>
            <person name="Lin L."/>
            <person name="Yin J."/>
            <person name="Geng J."/>
            <person name="Li G."/>
            <person name="Shi J."/>
            <person name="Liu J."/>
            <person name="Lv H."/>
            <person name="Li J."/>
            <person name="Wang J."/>
            <person name="Deng Y."/>
            <person name="Ran L."/>
            <person name="Shi X."/>
            <person name="Wang X."/>
            <person name="Wu Q."/>
            <person name="Li C."/>
            <person name="Ren X."/>
            <person name="Wang J."/>
            <person name="Wang X."/>
            <person name="Li D."/>
            <person name="Liu D."/>
            <person name="Zhang X."/>
            <person name="Ji Z."/>
            <person name="Zhao W."/>
            <person name="Sun Y."/>
            <person name="Zhang Z."/>
            <person name="Bao J."/>
            <person name="Han Y."/>
            <person name="Dong L."/>
            <person name="Ji J."/>
            <person name="Chen P."/>
            <person name="Wu S."/>
            <person name="Liu J."/>
            <person name="Xiao Y."/>
            <person name="Bu D."/>
            <person name="Tan J."/>
            <person name="Yang L."/>
            <person name="Ye C."/>
            <person name="Zhang J."/>
            <person name="Xu J."/>
            <person name="Zhou Y."/>
            <person name="Yu Y."/>
            <person name="Zhang B."/>
            <person name="Zhuang S."/>
            <person name="Wei H."/>
            <person name="Liu B."/>
            <person name="Lei M."/>
            <person name="Yu H."/>
            <person name="Li Y."/>
            <person name="Xu H."/>
            <person name="Wei S."/>
            <person name="He X."/>
            <person name="Fang L."/>
            <person name="Zhang Z."/>
            <person name="Zhang Y."/>
            <person name="Huang X."/>
            <person name="Su Z."/>
            <person name="Tong W."/>
            <person name="Li J."/>
            <person name="Tong Z."/>
            <person name="Li S."/>
            <person name="Ye J."/>
            <person name="Wang L."/>
            <person name="Fang L."/>
            <person name="Lei T."/>
            <person name="Chen C.-S."/>
            <person name="Chen H.-C."/>
            <person name="Xu Z."/>
            <person name="Li H."/>
            <person name="Huang H."/>
            <person name="Zhang F."/>
            <person name="Xu H."/>
            <person name="Li N."/>
            <person name="Zhao C."/>
            <person name="Li S."/>
            <person name="Dong L."/>
            <person name="Huang Y."/>
            <person name="Li L."/>
            <person name="Xi Y."/>
            <person name="Qi Q."/>
            <person name="Li W."/>
            <person name="Zhang B."/>
            <person name="Hu W."/>
            <person name="Zhang Y."/>
            <person name="Tian X."/>
            <person name="Jiao Y."/>
            <person name="Liang X."/>
            <person name="Jin J."/>
            <person name="Gao L."/>
            <person name="Zheng W."/>
            <person name="Hao B."/>
            <person name="Liu S.-M."/>
            <person name="Wang W."/>
            <person name="Yuan L."/>
            <person name="Cao M."/>
            <person name="McDermott J."/>
            <person name="Samudrala R."/>
            <person name="Wang J."/>
            <person name="Wong G.K.-S."/>
            <person name="Yang H."/>
        </authorList>
    </citation>
    <scope>NUCLEOTIDE SEQUENCE [LARGE SCALE GENOMIC DNA]</scope>
    <source>
        <strain>cv. Nipponbare</strain>
    </source>
</reference>
<reference key="5">
    <citation type="submission" date="2006-10" db="EMBL/GenBank/DDBJ databases">
        <title>Oryza sativa full length cDNA.</title>
        <authorList>
            <consortium name="The rice full-length cDNA consortium"/>
        </authorList>
    </citation>
    <scope>NUCLEOTIDE SEQUENCE [LARGE SCALE MRNA]</scope>
    <source>
        <strain>cv. Nipponbare</strain>
    </source>
</reference>
<reference key="6">
    <citation type="journal article" date="2009" name="Mol. Plant Microbe Interact.">
        <title>Suppression of the rice fatty-acid desaturase gene OsSSI2 enhances resistance to blast and leaf blight diseases in rice.</title>
        <authorList>
            <person name="Jiang C.J."/>
            <person name="Shimono M."/>
            <person name="Maeda S."/>
            <person name="Inoue H."/>
            <person name="Mori M."/>
            <person name="Hasegawa M."/>
            <person name="Sugano S."/>
            <person name="Takatsuji H."/>
        </authorList>
    </citation>
    <scope>GENE FAMILY</scope>
</reference>
<feature type="transit peptide" description="Chloroplast" evidence="2">
    <location>
        <begin position="1"/>
        <end position="39"/>
    </location>
</feature>
<feature type="chain" id="PRO_0000401436" description="Acyl-[acyl-carrier-protein] desaturase 7, chloroplastic">
    <location>
        <begin position="40"/>
        <end position="404"/>
    </location>
</feature>
<feature type="binding site" evidence="1">
    <location>
        <position position="138"/>
    </location>
    <ligand>
        <name>Fe cation</name>
        <dbReference type="ChEBI" id="CHEBI:24875"/>
        <label>1</label>
    </ligand>
</feature>
<feature type="binding site" evidence="1">
    <location>
        <position position="176"/>
    </location>
    <ligand>
        <name>Fe cation</name>
        <dbReference type="ChEBI" id="CHEBI:24875"/>
        <label>1</label>
    </ligand>
</feature>
<feature type="binding site" evidence="1">
    <location>
        <position position="176"/>
    </location>
    <ligand>
        <name>Fe cation</name>
        <dbReference type="ChEBI" id="CHEBI:24875"/>
        <label>2</label>
    </ligand>
</feature>
<feature type="binding site" evidence="1">
    <location>
        <position position="179"/>
    </location>
    <ligand>
        <name>Fe cation</name>
        <dbReference type="ChEBI" id="CHEBI:24875"/>
        <label>1</label>
    </ligand>
</feature>
<feature type="binding site" evidence="1">
    <location>
        <position position="229"/>
    </location>
    <ligand>
        <name>Fe cation</name>
        <dbReference type="ChEBI" id="CHEBI:24875"/>
        <label>2</label>
    </ligand>
</feature>
<feature type="binding site" evidence="1">
    <location>
        <position position="262"/>
    </location>
    <ligand>
        <name>Fe cation</name>
        <dbReference type="ChEBI" id="CHEBI:24875"/>
        <label>1</label>
    </ligand>
</feature>
<feature type="binding site" evidence="1">
    <location>
        <position position="262"/>
    </location>
    <ligand>
        <name>Fe cation</name>
        <dbReference type="ChEBI" id="CHEBI:24875"/>
        <label>2</label>
    </ligand>
</feature>
<feature type="binding site" evidence="1">
    <location>
        <position position="265"/>
    </location>
    <ligand>
        <name>Fe cation</name>
        <dbReference type="ChEBI" id="CHEBI:24875"/>
        <label>2</label>
    </ligand>
</feature>
<feature type="sequence conflict" description="In Ref. 4; EAZ41833." evidence="3" ref="4">
    <original>H</original>
    <variation>Q</variation>
    <location>
        <position position="246"/>
    </location>
</feature>
<gene>
    <name type="ordered locus">Os08g0200100</name>
    <name type="ordered locus">LOC_Os08g10010</name>
    <name type="ORF">OsJ_26370</name>
    <name type="ORF">OSJNBb0094P23.43</name>
    <name type="ORF">P0556A11.14</name>
</gene>
<evidence type="ECO:0000250" key="1">
    <source>
        <dbReference type="UniProtKB" id="P22337"/>
    </source>
</evidence>
<evidence type="ECO:0000255" key="2"/>
<evidence type="ECO:0000305" key="3"/>
<dbReference type="EC" id="1.14.19.-"/>
<dbReference type="EMBL" id="AP004589">
    <property type="protein sequence ID" value="BAD03218.1"/>
    <property type="molecule type" value="Genomic_DNA"/>
</dbReference>
<dbReference type="EMBL" id="AP005416">
    <property type="protein sequence ID" value="BAD03587.1"/>
    <property type="molecule type" value="Genomic_DNA"/>
</dbReference>
<dbReference type="EMBL" id="AP008214">
    <property type="protein sequence ID" value="BAF23123.1"/>
    <property type="molecule type" value="Genomic_DNA"/>
</dbReference>
<dbReference type="EMBL" id="AP014964">
    <property type="protein sequence ID" value="BAT04252.1"/>
    <property type="molecule type" value="Genomic_DNA"/>
</dbReference>
<dbReference type="EMBL" id="CM000145">
    <property type="protein sequence ID" value="EAZ41833.1"/>
    <property type="molecule type" value="Genomic_DNA"/>
</dbReference>
<dbReference type="EMBL" id="AK241294">
    <property type="protein sequence ID" value="BAH01002.1"/>
    <property type="molecule type" value="mRNA"/>
</dbReference>
<dbReference type="RefSeq" id="XP_015649776.1">
    <property type="nucleotide sequence ID" value="XM_015794290.1"/>
</dbReference>
<dbReference type="SMR" id="Q6Z1I5"/>
<dbReference type="FunCoup" id="Q6Z1I5">
    <property type="interactions" value="55"/>
</dbReference>
<dbReference type="STRING" id="39947.Q6Z1I5"/>
<dbReference type="PaxDb" id="39947-Q6Z1I5"/>
<dbReference type="EnsemblPlants" id="Os08t0200100-01">
    <property type="protein sequence ID" value="Os08t0200100-01"/>
    <property type="gene ID" value="Os08g0200100"/>
</dbReference>
<dbReference type="Gramene" id="Os08t0200100-01">
    <property type="protein sequence ID" value="Os08t0200100-01"/>
    <property type="gene ID" value="Os08g0200100"/>
</dbReference>
<dbReference type="KEGG" id="dosa:Os08g0200100"/>
<dbReference type="eggNOG" id="ENOG502QRJK">
    <property type="taxonomic scope" value="Eukaryota"/>
</dbReference>
<dbReference type="HOGENOM" id="CLU_034505_1_0_1"/>
<dbReference type="InParanoid" id="Q6Z1I5"/>
<dbReference type="OMA" id="MMRHRIT"/>
<dbReference type="OrthoDB" id="589463at2759"/>
<dbReference type="UniPathway" id="UPA00199"/>
<dbReference type="Proteomes" id="UP000000763">
    <property type="component" value="Chromosome 8"/>
</dbReference>
<dbReference type="Proteomes" id="UP000007752">
    <property type="component" value="Chromosome 8"/>
</dbReference>
<dbReference type="Proteomes" id="UP000059680">
    <property type="component" value="Chromosome 8"/>
</dbReference>
<dbReference type="GO" id="GO:0009507">
    <property type="term" value="C:chloroplast"/>
    <property type="evidence" value="ECO:0007669"/>
    <property type="project" value="UniProtKB-SubCell"/>
</dbReference>
<dbReference type="GO" id="GO:0046872">
    <property type="term" value="F:metal ion binding"/>
    <property type="evidence" value="ECO:0007669"/>
    <property type="project" value="UniProtKB-KW"/>
</dbReference>
<dbReference type="GO" id="GO:0045300">
    <property type="term" value="F:stearoyl-[ACP] desaturase activity"/>
    <property type="evidence" value="ECO:0000318"/>
    <property type="project" value="GO_Central"/>
</dbReference>
<dbReference type="GO" id="GO:0006633">
    <property type="term" value="P:fatty acid biosynthetic process"/>
    <property type="evidence" value="ECO:0007669"/>
    <property type="project" value="UniProtKB-KW"/>
</dbReference>
<dbReference type="GO" id="GO:0006631">
    <property type="term" value="P:fatty acid metabolic process"/>
    <property type="evidence" value="ECO:0000318"/>
    <property type="project" value="GO_Central"/>
</dbReference>
<dbReference type="CDD" id="cd01050">
    <property type="entry name" value="Acyl_ACP_Desat"/>
    <property type="match status" value="1"/>
</dbReference>
<dbReference type="FunFam" id="1.10.620.20:FF:000002">
    <property type="entry name" value="Stearoyl-[acyl-carrier-protein] 9-desaturase, chloroplastic"/>
    <property type="match status" value="1"/>
</dbReference>
<dbReference type="Gene3D" id="1.10.620.20">
    <property type="entry name" value="Ribonucleotide Reductase, subunit A"/>
    <property type="match status" value="1"/>
</dbReference>
<dbReference type="InterPro" id="IPR005067">
    <property type="entry name" value="Fatty_acid_desaturase-2"/>
</dbReference>
<dbReference type="InterPro" id="IPR009078">
    <property type="entry name" value="Ferritin-like_SF"/>
</dbReference>
<dbReference type="InterPro" id="IPR012348">
    <property type="entry name" value="RNR-like"/>
</dbReference>
<dbReference type="PANTHER" id="PTHR31155">
    <property type="entry name" value="ACYL- ACYL-CARRIER-PROTEIN DESATURASE-RELATED"/>
    <property type="match status" value="1"/>
</dbReference>
<dbReference type="PANTHER" id="PTHR31155:SF40">
    <property type="entry name" value="ACYL-[ACYL-CARRIER-PROTEIN] DESATURASE 7, CHLOROPLASTIC"/>
    <property type="match status" value="1"/>
</dbReference>
<dbReference type="Pfam" id="PF03405">
    <property type="entry name" value="FA_desaturase_2"/>
    <property type="match status" value="1"/>
</dbReference>
<dbReference type="PIRSF" id="PIRSF000346">
    <property type="entry name" value="Dlt9_acylACP_des"/>
    <property type="match status" value="1"/>
</dbReference>
<dbReference type="SUPFAM" id="SSF47240">
    <property type="entry name" value="Ferritin-like"/>
    <property type="match status" value="1"/>
</dbReference>
<keyword id="KW-0150">Chloroplast</keyword>
<keyword id="KW-0275">Fatty acid biosynthesis</keyword>
<keyword id="KW-0276">Fatty acid metabolism</keyword>
<keyword id="KW-0408">Iron</keyword>
<keyword id="KW-0444">Lipid biosynthesis</keyword>
<keyword id="KW-0443">Lipid metabolism</keyword>
<keyword id="KW-0479">Metal-binding</keyword>
<keyword id="KW-0560">Oxidoreductase</keyword>
<keyword id="KW-0934">Plastid</keyword>
<keyword id="KW-1185">Reference proteome</keyword>
<keyword id="KW-0809">Transit peptide</keyword>
<proteinExistence type="evidence at transcript level"/>